<comment type="induction">
    <text evidence="1 2">By phytoplasma infection.</text>
</comment>
<comment type="similarity">
    <text evidence="2">Belongs to the thaumatin family.</text>
</comment>
<reference key="1">
    <citation type="journal article" date="2004" name="Acta Biochim. Biophys. Sin.">
        <title>Accumulation of pathogenesis-related type-5 like proteins in phytoplasma-infected garland chrysanthemum Chrysanthemum coronarium.</title>
        <authorList>
            <person name="Zhong B.X."/>
            <person name="Shen Y.W."/>
        </authorList>
    </citation>
    <scope>PROTEIN SEQUENCE</scope>
    <scope>INDUCTION</scope>
    <source>
        <strain>cv. Chu-you</strain>
    </source>
</reference>
<evidence type="ECO:0000269" key="1">
    <source>
    </source>
</evidence>
<evidence type="ECO:0000305" key="2"/>
<proteinExistence type="evidence at protein level"/>
<dbReference type="InterPro" id="IPR037176">
    <property type="entry name" value="Osmotin/thaumatin-like_sf"/>
</dbReference>
<dbReference type="SUPFAM" id="SSF49870">
    <property type="entry name" value="Osmotin, thaumatin-like protein"/>
    <property type="match status" value="1"/>
</dbReference>
<protein>
    <recommendedName>
        <fullName>Thaumatin-like protein 5</fullName>
    </recommendedName>
    <alternativeName>
        <fullName>CTLP5</fullName>
    </alternativeName>
</protein>
<feature type="chain" id="PRO_0000096227" description="Thaumatin-like protein 5">
    <location>
        <begin position="1"/>
        <end position="44" status="greater than"/>
    </location>
</feature>
<feature type="non-terminal residue" evidence="2">
    <location>
        <position position="44"/>
    </location>
</feature>
<accession>P81956</accession>
<keyword id="KW-0903">Direct protein sequencing</keyword>
<sequence length="44" mass="4471">ANFDIINQXPYTVXAAASPGGGRRLETGQSXXLQVAPGTTXAAI</sequence>
<organism evidence="2">
    <name type="scientific">Glebionis coronaria</name>
    <name type="common">Crown daisy</name>
    <name type="synonym">Chrysanthemum coronarium</name>
    <dbReference type="NCBI Taxonomy" id="99038"/>
    <lineage>
        <taxon>Eukaryota</taxon>
        <taxon>Viridiplantae</taxon>
        <taxon>Streptophyta</taxon>
        <taxon>Embryophyta</taxon>
        <taxon>Tracheophyta</taxon>
        <taxon>Spermatophyta</taxon>
        <taxon>Magnoliopsida</taxon>
        <taxon>eudicotyledons</taxon>
        <taxon>Gunneridae</taxon>
        <taxon>Pentapetalae</taxon>
        <taxon>asterids</taxon>
        <taxon>campanulids</taxon>
        <taxon>Asterales</taxon>
        <taxon>Asteraceae</taxon>
        <taxon>Asteroideae</taxon>
        <taxon>Anthemideae</taxon>
        <taxon>Mediterranean clade</taxon>
        <taxon>Glebionidinae</taxon>
        <taxon>Glebionis</taxon>
    </lineage>
</organism>
<name>TLP5_GLECO</name>